<feature type="chain" id="PRO_0000078526" description="Chaperone protein DnaK">
    <location>
        <begin position="1"/>
        <end position="645"/>
    </location>
</feature>
<feature type="region of interest" description="Disordered" evidence="2">
    <location>
        <begin position="509"/>
        <end position="530"/>
    </location>
</feature>
<feature type="region of interest" description="Disordered" evidence="2">
    <location>
        <begin position="615"/>
        <end position="645"/>
    </location>
</feature>
<feature type="compositionally biased region" description="Basic and acidic residues" evidence="2">
    <location>
        <begin position="518"/>
        <end position="530"/>
    </location>
</feature>
<feature type="compositionally biased region" description="Low complexity" evidence="2">
    <location>
        <begin position="615"/>
        <end position="626"/>
    </location>
</feature>
<feature type="compositionally biased region" description="Acidic residues" evidence="2">
    <location>
        <begin position="631"/>
        <end position="645"/>
    </location>
</feature>
<feature type="modified residue" description="Phosphothreonine; by autocatalysis" evidence="1">
    <location>
        <position position="199"/>
    </location>
</feature>
<protein>
    <recommendedName>
        <fullName evidence="1">Chaperone protein DnaK</fullName>
    </recommendedName>
    <alternativeName>
        <fullName evidence="1">HSP70</fullName>
    </alternativeName>
    <alternativeName>
        <fullName evidence="1">Heat shock 70 kDa protein</fullName>
    </alternativeName>
    <alternativeName>
        <fullName evidence="1">Heat shock protein 70</fullName>
    </alternativeName>
</protein>
<dbReference type="EMBL" id="BX294148">
    <property type="protein sequence ID" value="CAD76086.1"/>
    <property type="status" value="ALT_INIT"/>
    <property type="molecule type" value="Genomic_DNA"/>
</dbReference>
<dbReference type="RefSeq" id="NP_868709.1">
    <property type="nucleotide sequence ID" value="NC_005027.1"/>
</dbReference>
<dbReference type="RefSeq" id="WP_007326035.1">
    <property type="nucleotide sequence ID" value="NC_005027.1"/>
</dbReference>
<dbReference type="SMR" id="Q7UM31"/>
<dbReference type="FunCoup" id="Q7UM31">
    <property type="interactions" value="619"/>
</dbReference>
<dbReference type="STRING" id="243090.RB9105"/>
<dbReference type="EnsemblBacteria" id="CAD76086">
    <property type="protein sequence ID" value="CAD76086"/>
    <property type="gene ID" value="RB9105"/>
</dbReference>
<dbReference type="KEGG" id="rba:RB9105"/>
<dbReference type="PATRIC" id="fig|243090.15.peg.4363"/>
<dbReference type="eggNOG" id="COG0443">
    <property type="taxonomic scope" value="Bacteria"/>
</dbReference>
<dbReference type="HOGENOM" id="CLU_005965_2_1_0"/>
<dbReference type="InParanoid" id="Q7UM31"/>
<dbReference type="OrthoDB" id="9766019at2"/>
<dbReference type="Proteomes" id="UP000001025">
    <property type="component" value="Chromosome"/>
</dbReference>
<dbReference type="GO" id="GO:0005524">
    <property type="term" value="F:ATP binding"/>
    <property type="evidence" value="ECO:0007669"/>
    <property type="project" value="UniProtKB-UniRule"/>
</dbReference>
<dbReference type="GO" id="GO:0016887">
    <property type="term" value="F:ATP hydrolysis activity"/>
    <property type="evidence" value="ECO:0000318"/>
    <property type="project" value="GO_Central"/>
</dbReference>
<dbReference type="GO" id="GO:0140662">
    <property type="term" value="F:ATP-dependent protein folding chaperone"/>
    <property type="evidence" value="ECO:0007669"/>
    <property type="project" value="InterPro"/>
</dbReference>
<dbReference type="GO" id="GO:0031072">
    <property type="term" value="F:heat shock protein binding"/>
    <property type="evidence" value="ECO:0000318"/>
    <property type="project" value="GO_Central"/>
</dbReference>
<dbReference type="GO" id="GO:0044183">
    <property type="term" value="F:protein folding chaperone"/>
    <property type="evidence" value="ECO:0000318"/>
    <property type="project" value="GO_Central"/>
</dbReference>
<dbReference type="GO" id="GO:0051082">
    <property type="term" value="F:unfolded protein binding"/>
    <property type="evidence" value="ECO:0007669"/>
    <property type="project" value="InterPro"/>
</dbReference>
<dbReference type="GO" id="GO:0051085">
    <property type="term" value="P:chaperone cofactor-dependent protein refolding"/>
    <property type="evidence" value="ECO:0000318"/>
    <property type="project" value="GO_Central"/>
</dbReference>
<dbReference type="GO" id="GO:0042026">
    <property type="term" value="P:protein refolding"/>
    <property type="evidence" value="ECO:0000318"/>
    <property type="project" value="GO_Central"/>
</dbReference>
<dbReference type="CDD" id="cd10234">
    <property type="entry name" value="ASKHA_NBD_HSP70_DnaK-like"/>
    <property type="match status" value="1"/>
</dbReference>
<dbReference type="FunFam" id="2.60.34.10:FF:000014">
    <property type="entry name" value="Chaperone protein DnaK HSP70"/>
    <property type="match status" value="1"/>
</dbReference>
<dbReference type="FunFam" id="1.20.1270.10:FF:000001">
    <property type="entry name" value="Molecular chaperone DnaK"/>
    <property type="match status" value="1"/>
</dbReference>
<dbReference type="FunFam" id="3.30.420.40:FF:000004">
    <property type="entry name" value="Molecular chaperone DnaK"/>
    <property type="match status" value="1"/>
</dbReference>
<dbReference type="FunFam" id="3.90.640.10:FF:000003">
    <property type="entry name" value="Molecular chaperone DnaK"/>
    <property type="match status" value="1"/>
</dbReference>
<dbReference type="Gene3D" id="1.20.1270.10">
    <property type="match status" value="1"/>
</dbReference>
<dbReference type="Gene3D" id="3.30.420.40">
    <property type="match status" value="2"/>
</dbReference>
<dbReference type="Gene3D" id="3.90.640.10">
    <property type="entry name" value="Actin, Chain A, domain 4"/>
    <property type="match status" value="1"/>
</dbReference>
<dbReference type="Gene3D" id="2.60.34.10">
    <property type="entry name" value="Substrate Binding Domain Of DNAk, Chain A, domain 1"/>
    <property type="match status" value="1"/>
</dbReference>
<dbReference type="HAMAP" id="MF_00332">
    <property type="entry name" value="DnaK"/>
    <property type="match status" value="1"/>
</dbReference>
<dbReference type="InterPro" id="IPR043129">
    <property type="entry name" value="ATPase_NBD"/>
</dbReference>
<dbReference type="InterPro" id="IPR012725">
    <property type="entry name" value="Chaperone_DnaK"/>
</dbReference>
<dbReference type="InterPro" id="IPR018181">
    <property type="entry name" value="Heat_shock_70_CS"/>
</dbReference>
<dbReference type="InterPro" id="IPR029048">
    <property type="entry name" value="HSP70_C_sf"/>
</dbReference>
<dbReference type="InterPro" id="IPR029047">
    <property type="entry name" value="HSP70_peptide-bd_sf"/>
</dbReference>
<dbReference type="InterPro" id="IPR013126">
    <property type="entry name" value="Hsp_70_fam"/>
</dbReference>
<dbReference type="NCBIfam" id="NF001413">
    <property type="entry name" value="PRK00290.1"/>
    <property type="match status" value="1"/>
</dbReference>
<dbReference type="NCBIfam" id="NF003520">
    <property type="entry name" value="PRK05183.1"/>
    <property type="match status" value="1"/>
</dbReference>
<dbReference type="NCBIfam" id="TIGR02350">
    <property type="entry name" value="prok_dnaK"/>
    <property type="match status" value="1"/>
</dbReference>
<dbReference type="PANTHER" id="PTHR19375">
    <property type="entry name" value="HEAT SHOCK PROTEIN 70KDA"/>
    <property type="match status" value="1"/>
</dbReference>
<dbReference type="Pfam" id="PF00012">
    <property type="entry name" value="HSP70"/>
    <property type="match status" value="1"/>
</dbReference>
<dbReference type="PRINTS" id="PR00301">
    <property type="entry name" value="HEATSHOCK70"/>
</dbReference>
<dbReference type="SUPFAM" id="SSF53067">
    <property type="entry name" value="Actin-like ATPase domain"/>
    <property type="match status" value="2"/>
</dbReference>
<dbReference type="SUPFAM" id="SSF100934">
    <property type="entry name" value="Heat shock protein 70kD (HSP70), C-terminal subdomain"/>
    <property type="match status" value="1"/>
</dbReference>
<dbReference type="SUPFAM" id="SSF100920">
    <property type="entry name" value="Heat shock protein 70kD (HSP70), peptide-binding domain"/>
    <property type="match status" value="1"/>
</dbReference>
<dbReference type="PROSITE" id="PS00297">
    <property type="entry name" value="HSP70_1"/>
    <property type="match status" value="1"/>
</dbReference>
<dbReference type="PROSITE" id="PS00329">
    <property type="entry name" value="HSP70_2"/>
    <property type="match status" value="1"/>
</dbReference>
<dbReference type="PROSITE" id="PS01036">
    <property type="entry name" value="HSP70_3"/>
    <property type="match status" value="1"/>
</dbReference>
<reference key="1">
    <citation type="journal article" date="2003" name="Proc. Natl. Acad. Sci. U.S.A.">
        <title>Complete genome sequence of the marine planctomycete Pirellula sp. strain 1.</title>
        <authorList>
            <person name="Gloeckner F.O."/>
            <person name="Kube M."/>
            <person name="Bauer M."/>
            <person name="Teeling H."/>
            <person name="Lombardot T."/>
            <person name="Ludwig W."/>
            <person name="Gade D."/>
            <person name="Beck A."/>
            <person name="Borzym K."/>
            <person name="Heitmann K."/>
            <person name="Rabus R."/>
            <person name="Schlesner H."/>
            <person name="Amann R."/>
            <person name="Reinhardt R."/>
        </authorList>
    </citation>
    <scope>NUCLEOTIDE SEQUENCE [LARGE SCALE GENOMIC DNA]</scope>
    <source>
        <strain>DSM 10527 / NCIMB 13988 / SH1</strain>
    </source>
</reference>
<keyword id="KW-0067">ATP-binding</keyword>
<keyword id="KW-0143">Chaperone</keyword>
<keyword id="KW-0547">Nucleotide-binding</keyword>
<keyword id="KW-0597">Phosphoprotein</keyword>
<keyword id="KW-1185">Reference proteome</keyword>
<keyword id="KW-0346">Stress response</keyword>
<organism>
    <name type="scientific">Rhodopirellula baltica (strain DSM 10527 / NCIMB 13988 / SH1)</name>
    <dbReference type="NCBI Taxonomy" id="243090"/>
    <lineage>
        <taxon>Bacteria</taxon>
        <taxon>Pseudomonadati</taxon>
        <taxon>Planctomycetota</taxon>
        <taxon>Planctomycetia</taxon>
        <taxon>Pirellulales</taxon>
        <taxon>Pirellulaceae</taxon>
        <taxon>Rhodopirellula</taxon>
    </lineage>
</organism>
<proteinExistence type="inferred from homology"/>
<name>DNAK_RHOBA</name>
<gene>
    <name evidence="1" type="primary">dnaK</name>
    <name type="ordered locus">RB9105</name>
</gene>
<comment type="function">
    <text evidence="1">Acts as a chaperone.</text>
</comment>
<comment type="induction">
    <text evidence="1">By stress conditions e.g. heat shock.</text>
</comment>
<comment type="similarity">
    <text evidence="1">Belongs to the heat shock protein 70 family.</text>
</comment>
<comment type="sequence caution" evidence="3">
    <conflict type="erroneous initiation">
        <sequence resource="EMBL-CDS" id="CAD76086"/>
    </conflict>
</comment>
<sequence>MAQGEKIIGIDLGTTNSVVAIMEGSEPKVIPNPEGNRLTPSVVAFTDKQETIVGEPARRQAVTNPKRTVYSAKRFMGRRHNEVQSEEKMVPYGITGGPGDYVKIQVGDSEYTPQEISAKVLRKLKESAESYLGHKVNKAVITVPAYFNDAQRQATKDAGQIAGLEVARIINEPTAAALAYGLDKKKDESIIVFDLGGGTFDVSVLEVADSGDEEQESRVFQVVSTSGDTHLGGDDFDEALINYVASEFQKDNGIDLRNDAMALQRLQEACEKAKKELSTLPETDINLPFITMDASGPKHLTMKITRSKFEELIDALVERCRGPVLQALKDAGMDPKDIDEVVLVGGSTRVPKVREVVKSIFGKDPHQGVNPDEVVAVGAAIQGSVLAGDRNDVLLLDVTPLTLGIETEGGVMTALVERNTTIPAEKKNVFSTAADNQTAVTVRVFQGERKMANANRLLAEFNLEDIPAAPRGVPQIEVKFDIDQNGILSVSAKELKTGKEANVEIKDSGALSDSDIEQMQKDAEANAEEDKRQFELVEARNKVNQQVYQLEKLMGENDDKLSDDDKAPMNAAIEKVKKAAEGDDLAEIKAASDELEAASQAFSKVLYEKTDAAGEAGADAAGAAGATAGGGDDDDAIDAEFEVKE</sequence>
<accession>Q7UM31</accession>
<evidence type="ECO:0000255" key="1">
    <source>
        <dbReference type="HAMAP-Rule" id="MF_00332"/>
    </source>
</evidence>
<evidence type="ECO:0000256" key="2">
    <source>
        <dbReference type="SAM" id="MobiDB-lite"/>
    </source>
</evidence>
<evidence type="ECO:0000305" key="3"/>